<accession>Q2NWR5</accession>
<reference key="1">
    <citation type="journal article" date="2006" name="Genome Res.">
        <title>Massive genome erosion and functional adaptations provide insights into the symbiotic lifestyle of Sodalis glossinidius in the tsetse host.</title>
        <authorList>
            <person name="Toh H."/>
            <person name="Weiss B.L."/>
            <person name="Perkin S.A.H."/>
            <person name="Yamashita A."/>
            <person name="Oshima K."/>
            <person name="Hattori M."/>
            <person name="Aksoy S."/>
        </authorList>
    </citation>
    <scope>NUCLEOTIDE SEQUENCE [LARGE SCALE GENOMIC DNA]</scope>
    <source>
        <strain>morsitans</strain>
    </source>
</reference>
<dbReference type="EC" id="2.7.7.6" evidence="1"/>
<dbReference type="EMBL" id="AP008232">
    <property type="protein sequence ID" value="BAE73410.1"/>
    <property type="molecule type" value="Genomic_DNA"/>
</dbReference>
<dbReference type="RefSeq" id="WP_011409999.1">
    <property type="nucleotide sequence ID" value="NC_007712.1"/>
</dbReference>
<dbReference type="SMR" id="Q2NWR5"/>
<dbReference type="STRING" id="343509.SG0135"/>
<dbReference type="KEGG" id="sgl:SG0135"/>
<dbReference type="eggNOG" id="COG0086">
    <property type="taxonomic scope" value="Bacteria"/>
</dbReference>
<dbReference type="HOGENOM" id="CLU_000524_3_1_6"/>
<dbReference type="OrthoDB" id="9815296at2"/>
<dbReference type="Proteomes" id="UP000001932">
    <property type="component" value="Chromosome"/>
</dbReference>
<dbReference type="GO" id="GO:0000428">
    <property type="term" value="C:DNA-directed RNA polymerase complex"/>
    <property type="evidence" value="ECO:0007669"/>
    <property type="project" value="UniProtKB-KW"/>
</dbReference>
<dbReference type="GO" id="GO:0003677">
    <property type="term" value="F:DNA binding"/>
    <property type="evidence" value="ECO:0007669"/>
    <property type="project" value="UniProtKB-UniRule"/>
</dbReference>
<dbReference type="GO" id="GO:0003899">
    <property type="term" value="F:DNA-directed RNA polymerase activity"/>
    <property type="evidence" value="ECO:0007669"/>
    <property type="project" value="UniProtKB-UniRule"/>
</dbReference>
<dbReference type="GO" id="GO:0000287">
    <property type="term" value="F:magnesium ion binding"/>
    <property type="evidence" value="ECO:0007669"/>
    <property type="project" value="UniProtKB-UniRule"/>
</dbReference>
<dbReference type="GO" id="GO:0008270">
    <property type="term" value="F:zinc ion binding"/>
    <property type="evidence" value="ECO:0007669"/>
    <property type="project" value="UniProtKB-UniRule"/>
</dbReference>
<dbReference type="GO" id="GO:0006351">
    <property type="term" value="P:DNA-templated transcription"/>
    <property type="evidence" value="ECO:0007669"/>
    <property type="project" value="UniProtKB-UniRule"/>
</dbReference>
<dbReference type="CDD" id="cd02655">
    <property type="entry name" value="RNAP_beta'_C"/>
    <property type="match status" value="1"/>
</dbReference>
<dbReference type="CDD" id="cd01609">
    <property type="entry name" value="RNAP_beta'_N"/>
    <property type="match status" value="1"/>
</dbReference>
<dbReference type="FunFam" id="1.10.132.30:FF:000003">
    <property type="entry name" value="DNA-directed RNA polymerase subunit beta"/>
    <property type="match status" value="1"/>
</dbReference>
<dbReference type="FunFam" id="1.10.150.390:FF:000002">
    <property type="entry name" value="DNA-directed RNA polymerase subunit beta"/>
    <property type="match status" value="1"/>
</dbReference>
<dbReference type="FunFam" id="1.10.274.100:FF:000002">
    <property type="entry name" value="DNA-directed RNA polymerase subunit beta"/>
    <property type="match status" value="1"/>
</dbReference>
<dbReference type="FunFam" id="1.10.40.90:FF:000001">
    <property type="entry name" value="DNA-directed RNA polymerase subunit beta"/>
    <property type="match status" value="1"/>
</dbReference>
<dbReference type="FunFam" id="2.40.50.100:FF:000012">
    <property type="entry name" value="DNA-directed RNA polymerase subunit beta"/>
    <property type="match status" value="1"/>
</dbReference>
<dbReference type="FunFam" id="2.40.50.100:FF:000016">
    <property type="entry name" value="DNA-directed RNA polymerase subunit beta"/>
    <property type="match status" value="1"/>
</dbReference>
<dbReference type="FunFam" id="2.40.50.100:FF:000019">
    <property type="entry name" value="DNA-directed RNA polymerase subunit beta"/>
    <property type="match status" value="1"/>
</dbReference>
<dbReference type="FunFam" id="4.10.860.120:FF:000001">
    <property type="entry name" value="DNA-directed RNA polymerase subunit beta"/>
    <property type="match status" value="1"/>
</dbReference>
<dbReference type="Gene3D" id="1.10.132.30">
    <property type="match status" value="1"/>
</dbReference>
<dbReference type="Gene3D" id="1.10.150.390">
    <property type="match status" value="1"/>
</dbReference>
<dbReference type="Gene3D" id="1.10.1790.20">
    <property type="match status" value="1"/>
</dbReference>
<dbReference type="Gene3D" id="1.10.40.90">
    <property type="match status" value="1"/>
</dbReference>
<dbReference type="Gene3D" id="2.40.40.20">
    <property type="match status" value="1"/>
</dbReference>
<dbReference type="Gene3D" id="2.40.50.100">
    <property type="match status" value="3"/>
</dbReference>
<dbReference type="Gene3D" id="4.10.860.120">
    <property type="entry name" value="RNA polymerase II, clamp domain"/>
    <property type="match status" value="1"/>
</dbReference>
<dbReference type="Gene3D" id="1.10.274.100">
    <property type="entry name" value="RNA polymerase Rpb1, domain 3"/>
    <property type="match status" value="1"/>
</dbReference>
<dbReference type="HAMAP" id="MF_01322">
    <property type="entry name" value="RNApol_bact_RpoC"/>
    <property type="match status" value="1"/>
</dbReference>
<dbReference type="InterPro" id="IPR045867">
    <property type="entry name" value="DNA-dir_RpoC_beta_prime"/>
</dbReference>
<dbReference type="InterPro" id="IPR012754">
    <property type="entry name" value="DNA-dir_RpoC_beta_prime_bact"/>
</dbReference>
<dbReference type="InterPro" id="IPR000722">
    <property type="entry name" value="RNA_pol_asu"/>
</dbReference>
<dbReference type="InterPro" id="IPR006592">
    <property type="entry name" value="RNA_pol_N"/>
</dbReference>
<dbReference type="InterPro" id="IPR007080">
    <property type="entry name" value="RNA_pol_Rpb1_1"/>
</dbReference>
<dbReference type="InterPro" id="IPR007066">
    <property type="entry name" value="RNA_pol_Rpb1_3"/>
</dbReference>
<dbReference type="InterPro" id="IPR042102">
    <property type="entry name" value="RNA_pol_Rpb1_3_sf"/>
</dbReference>
<dbReference type="InterPro" id="IPR007083">
    <property type="entry name" value="RNA_pol_Rpb1_4"/>
</dbReference>
<dbReference type="InterPro" id="IPR007081">
    <property type="entry name" value="RNA_pol_Rpb1_5"/>
</dbReference>
<dbReference type="InterPro" id="IPR044893">
    <property type="entry name" value="RNA_pol_Rpb1_clamp_domain"/>
</dbReference>
<dbReference type="InterPro" id="IPR038120">
    <property type="entry name" value="Rpb1_funnel_sf"/>
</dbReference>
<dbReference type="NCBIfam" id="TIGR02386">
    <property type="entry name" value="rpoC_TIGR"/>
    <property type="match status" value="1"/>
</dbReference>
<dbReference type="PANTHER" id="PTHR19376">
    <property type="entry name" value="DNA-DIRECTED RNA POLYMERASE"/>
    <property type="match status" value="1"/>
</dbReference>
<dbReference type="PANTHER" id="PTHR19376:SF54">
    <property type="entry name" value="DNA-DIRECTED RNA POLYMERASE SUBUNIT BETA"/>
    <property type="match status" value="1"/>
</dbReference>
<dbReference type="Pfam" id="PF04997">
    <property type="entry name" value="RNA_pol_Rpb1_1"/>
    <property type="match status" value="1"/>
</dbReference>
<dbReference type="Pfam" id="PF00623">
    <property type="entry name" value="RNA_pol_Rpb1_2"/>
    <property type="match status" value="2"/>
</dbReference>
<dbReference type="Pfam" id="PF04983">
    <property type="entry name" value="RNA_pol_Rpb1_3"/>
    <property type="match status" value="1"/>
</dbReference>
<dbReference type="Pfam" id="PF05000">
    <property type="entry name" value="RNA_pol_Rpb1_4"/>
    <property type="match status" value="1"/>
</dbReference>
<dbReference type="Pfam" id="PF04998">
    <property type="entry name" value="RNA_pol_Rpb1_5"/>
    <property type="match status" value="1"/>
</dbReference>
<dbReference type="SMART" id="SM00663">
    <property type="entry name" value="RPOLA_N"/>
    <property type="match status" value="1"/>
</dbReference>
<dbReference type="SUPFAM" id="SSF64484">
    <property type="entry name" value="beta and beta-prime subunits of DNA dependent RNA-polymerase"/>
    <property type="match status" value="1"/>
</dbReference>
<proteinExistence type="inferred from homology"/>
<comment type="function">
    <text evidence="1">DNA-dependent RNA polymerase catalyzes the transcription of DNA into RNA using the four ribonucleoside triphosphates as substrates.</text>
</comment>
<comment type="catalytic activity">
    <reaction evidence="1">
        <text>RNA(n) + a ribonucleoside 5'-triphosphate = RNA(n+1) + diphosphate</text>
        <dbReference type="Rhea" id="RHEA:21248"/>
        <dbReference type="Rhea" id="RHEA-COMP:14527"/>
        <dbReference type="Rhea" id="RHEA-COMP:17342"/>
        <dbReference type="ChEBI" id="CHEBI:33019"/>
        <dbReference type="ChEBI" id="CHEBI:61557"/>
        <dbReference type="ChEBI" id="CHEBI:140395"/>
        <dbReference type="EC" id="2.7.7.6"/>
    </reaction>
</comment>
<comment type="cofactor">
    <cofactor evidence="1">
        <name>Mg(2+)</name>
        <dbReference type="ChEBI" id="CHEBI:18420"/>
    </cofactor>
    <text evidence="1">Binds 1 Mg(2+) ion per subunit.</text>
</comment>
<comment type="cofactor">
    <cofactor evidence="1">
        <name>Zn(2+)</name>
        <dbReference type="ChEBI" id="CHEBI:29105"/>
    </cofactor>
    <text evidence="1">Binds 2 Zn(2+) ions per subunit.</text>
</comment>
<comment type="subunit">
    <text evidence="1">The RNAP catalytic core consists of 2 alpha, 1 beta, 1 beta' and 1 omega subunit. When a sigma factor is associated with the core the holoenzyme is formed, which can initiate transcription.</text>
</comment>
<comment type="similarity">
    <text evidence="1">Belongs to the RNA polymerase beta' chain family.</text>
</comment>
<keyword id="KW-0240">DNA-directed RNA polymerase</keyword>
<keyword id="KW-0460">Magnesium</keyword>
<keyword id="KW-0479">Metal-binding</keyword>
<keyword id="KW-0548">Nucleotidyltransferase</keyword>
<keyword id="KW-0804">Transcription</keyword>
<keyword id="KW-0808">Transferase</keyword>
<keyword id="KW-0862">Zinc</keyword>
<evidence type="ECO:0000255" key="1">
    <source>
        <dbReference type="HAMAP-Rule" id="MF_01322"/>
    </source>
</evidence>
<gene>
    <name evidence="1" type="primary">rpoC</name>
    <name type="ordered locus">SG0135</name>
</gene>
<sequence length="1406" mass="155491">MKDLLKFLKAQTKTEEFDAIKIALASPDMIRSWSFGEVKKPETINYRTFKPERYGLFCARIFGPVKDYECLCGKYKRLKHRGVICEKCGVEVTQTKVRRERMGHIELASPTAHIWFLKSLPSRIGLLLDMPLRDIERVLYFESYVVVEGGMTNLERRQILTEEQYLDALEEFGDEFDAKMGAEAIQALLKNMDLEQECEQLREELEETNSETKRKKLTKRIKLLEAFVLSGNKPEWMILTVLPVLPPDLRPLVPLDGGRFATSDLNDLYRRVINRNNRLKRLLDLAAPDIIVRNEKRMLQEAVDALLDNGRRGRAITGSNKRPLKSLADMIKGKQGRFRQNLLGKRVDYSGRSVITVGPYLRLHQCGLPKKMALELFKPFIYGKLELRGLATTIKAAKKMVEREEAVVWDILDEVIREHPVMLNRAPTLHRLGIQAFEPVLIEGKAIQLHPLVCAAYNADFDGDQMAVHVPLTLEAQLEARALMMSTNNILSPANGEPIIVPSQDVVLGLYYMTRDRVNGKGEGMVLTGPKEAERIYRAGVAELHARVKVRITEHEKRDNGESVENTHLVDTTVGRAILWMIVPKGLPFSLVNQALGKKAISKMLNTCYRVLGLKPTVIFADQIMYTGFAYAARSGSSVGIDDMVIPAKKAEIIDEAEAEVAEIQEQFQSGLVTAGERYNKVIDIWAAANERVAKAMMDNLSTEAVINRDGEEERQVSFNSIFMMADSGARGSAAQIRQLAGMRGLMAKPDGSIIETPITANFREGLNVLQYFISTHGARKGLADTALKTANSGYLTRRLVDVAQDLVVTEDDCGTFAGIVMTPVIEGGDVKEPLRERVLGRVTAEDVLKPGTADILVERNTLLNEKWCDVLEENSVDSVKVRSVVTCDTDFGVCANCYGRDLARGHLVNKGEAIGVIAAQSIGEPGTQLTMRTFHIGGAASRAAAESSIQVKNKGTIRLSNAKFVVNGSGKLVITSRNTELKLVDEFGRTKESYKVPYGAVMAKGDGAEIMGGETVANWDPHTMPVITEVDGFVRFTDMIDGQTITRQTDELTGLSSIVILDTAERTSGGKDLRPALRIVDANGNDVLLPGTDMPAQYFLPGKTIVQLEDGAKITGGDTLARLPQETSGTKDITGGLPRVADLFEARRPKEPAILAEISGIVSFGKETKGKRRLVISPVDGSDAYEEMIPKWRQLNVFEGERVERGDVISDGPESPHDILRLRGVHAVTRYIVNEVQDVYRLQGVKINDKHIEVIVRQMLRKATIASSGSSEFLEGEQVEYSRIKIANRQLENDGKVEMTYVRDLLGITKASLATESFISAASFQETTRVLTEAAVAGKRDELRGLKENVIVGRLIPAGTGYAYHQERARHRQQGEAPAAPQITADEASANLAELLNAGLGGNDD</sequence>
<name>RPOC_SODGM</name>
<protein>
    <recommendedName>
        <fullName evidence="1">DNA-directed RNA polymerase subunit beta'</fullName>
        <shortName evidence="1">RNAP subunit beta'</shortName>
        <ecNumber evidence="1">2.7.7.6</ecNumber>
    </recommendedName>
    <alternativeName>
        <fullName evidence="1">RNA polymerase subunit beta'</fullName>
    </alternativeName>
    <alternativeName>
        <fullName evidence="1">Transcriptase subunit beta'</fullName>
    </alternativeName>
</protein>
<organism>
    <name type="scientific">Sodalis glossinidius (strain morsitans)</name>
    <dbReference type="NCBI Taxonomy" id="343509"/>
    <lineage>
        <taxon>Bacteria</taxon>
        <taxon>Pseudomonadati</taxon>
        <taxon>Pseudomonadota</taxon>
        <taxon>Gammaproteobacteria</taxon>
        <taxon>Enterobacterales</taxon>
        <taxon>Bruguierivoracaceae</taxon>
        <taxon>Sodalis</taxon>
    </lineage>
</organism>
<feature type="chain" id="PRO_0000240824" description="DNA-directed RNA polymerase subunit beta'">
    <location>
        <begin position="1"/>
        <end position="1406"/>
    </location>
</feature>
<feature type="binding site" evidence="1">
    <location>
        <position position="70"/>
    </location>
    <ligand>
        <name>Zn(2+)</name>
        <dbReference type="ChEBI" id="CHEBI:29105"/>
        <label>1</label>
    </ligand>
</feature>
<feature type="binding site" evidence="1">
    <location>
        <position position="72"/>
    </location>
    <ligand>
        <name>Zn(2+)</name>
        <dbReference type="ChEBI" id="CHEBI:29105"/>
        <label>1</label>
    </ligand>
</feature>
<feature type="binding site" evidence="1">
    <location>
        <position position="85"/>
    </location>
    <ligand>
        <name>Zn(2+)</name>
        <dbReference type="ChEBI" id="CHEBI:29105"/>
        <label>1</label>
    </ligand>
</feature>
<feature type="binding site" evidence="1">
    <location>
        <position position="88"/>
    </location>
    <ligand>
        <name>Zn(2+)</name>
        <dbReference type="ChEBI" id="CHEBI:29105"/>
        <label>1</label>
    </ligand>
</feature>
<feature type="binding site" evidence="1">
    <location>
        <position position="460"/>
    </location>
    <ligand>
        <name>Mg(2+)</name>
        <dbReference type="ChEBI" id="CHEBI:18420"/>
    </ligand>
</feature>
<feature type="binding site" evidence="1">
    <location>
        <position position="462"/>
    </location>
    <ligand>
        <name>Mg(2+)</name>
        <dbReference type="ChEBI" id="CHEBI:18420"/>
    </ligand>
</feature>
<feature type="binding site" evidence="1">
    <location>
        <position position="464"/>
    </location>
    <ligand>
        <name>Mg(2+)</name>
        <dbReference type="ChEBI" id="CHEBI:18420"/>
    </ligand>
</feature>
<feature type="binding site" evidence="1">
    <location>
        <position position="814"/>
    </location>
    <ligand>
        <name>Zn(2+)</name>
        <dbReference type="ChEBI" id="CHEBI:29105"/>
        <label>2</label>
    </ligand>
</feature>
<feature type="binding site" evidence="1">
    <location>
        <position position="888"/>
    </location>
    <ligand>
        <name>Zn(2+)</name>
        <dbReference type="ChEBI" id="CHEBI:29105"/>
        <label>2</label>
    </ligand>
</feature>
<feature type="binding site" evidence="1">
    <location>
        <position position="895"/>
    </location>
    <ligand>
        <name>Zn(2+)</name>
        <dbReference type="ChEBI" id="CHEBI:29105"/>
        <label>2</label>
    </ligand>
</feature>
<feature type="binding site" evidence="1">
    <location>
        <position position="898"/>
    </location>
    <ligand>
        <name>Zn(2+)</name>
        <dbReference type="ChEBI" id="CHEBI:29105"/>
        <label>2</label>
    </ligand>
</feature>